<comment type="function">
    <text evidence="1">Part of the ABC transporter complex OppABCDF involved in the uptake of oligopeptides (By similarity). Probably responsible for energy coupling to the transport system (By similarity).</text>
</comment>
<comment type="catalytic activity">
    <reaction evidence="1">
        <text>a [peptide](out) + ATP + H2O = a [peptide](in) + ADP + phosphate + H(+)</text>
        <dbReference type="Rhea" id="RHEA:78459"/>
        <dbReference type="Rhea" id="RHEA-COMP:19083"/>
        <dbReference type="ChEBI" id="CHEBI:15377"/>
        <dbReference type="ChEBI" id="CHEBI:15378"/>
        <dbReference type="ChEBI" id="CHEBI:30616"/>
        <dbReference type="ChEBI" id="CHEBI:33710"/>
        <dbReference type="ChEBI" id="CHEBI:43474"/>
        <dbReference type="ChEBI" id="CHEBI:456216"/>
        <dbReference type="EC" id="7.4.2.6"/>
    </reaction>
    <physiologicalReaction direction="left-to-right" evidence="1">
        <dbReference type="Rhea" id="RHEA:78460"/>
    </physiologicalReaction>
</comment>
<comment type="subunit">
    <text evidence="1">The complex is composed of two ATP-binding proteins (OppD and OppF), two transmembrane proteins (OppB and OppC) and a solute-binding protein (OppA).</text>
</comment>
<comment type="subcellular location">
    <subcellularLocation>
        <location evidence="1">Cell membrane</location>
        <topology evidence="1">Peripheral membrane protein</topology>
    </subcellularLocation>
</comment>
<comment type="similarity">
    <text evidence="3">Belongs to the ABC transporter superfamily.</text>
</comment>
<keyword id="KW-0067">ATP-binding</keyword>
<keyword id="KW-1003">Cell membrane</keyword>
<keyword id="KW-0472">Membrane</keyword>
<keyword id="KW-0547">Nucleotide-binding</keyword>
<keyword id="KW-0571">Peptide transport</keyword>
<keyword id="KW-0653">Protein transport</keyword>
<keyword id="KW-1278">Translocase</keyword>
<keyword id="KW-0813">Transport</keyword>
<name>OPPF_STRP3</name>
<organism>
    <name type="scientific">Streptococcus pyogenes serotype M3 (strain ATCC BAA-595 / MGAS315)</name>
    <dbReference type="NCBI Taxonomy" id="198466"/>
    <lineage>
        <taxon>Bacteria</taxon>
        <taxon>Bacillati</taxon>
        <taxon>Bacillota</taxon>
        <taxon>Bacilli</taxon>
        <taxon>Lactobacillales</taxon>
        <taxon>Streptococcaceae</taxon>
        <taxon>Streptococcus</taxon>
    </lineage>
</organism>
<reference key="1">
    <citation type="journal article" date="2002" name="Proc. Natl. Acad. Sci. U.S.A.">
        <title>Genome sequence of a serotype M3 strain of group A Streptococcus: phage-encoded toxins, the high-virulence phenotype, and clone emergence.</title>
        <authorList>
            <person name="Beres S.B."/>
            <person name="Sylva G.L."/>
            <person name="Barbian K.D."/>
            <person name="Lei B."/>
            <person name="Hoff J.S."/>
            <person name="Mammarella N.D."/>
            <person name="Liu M.-Y."/>
            <person name="Smoot J.C."/>
            <person name="Porcella S.F."/>
            <person name="Parkins L.D."/>
            <person name="Campbell D.S."/>
            <person name="Smith T.M."/>
            <person name="McCormick J.K."/>
            <person name="Leung D.Y.M."/>
            <person name="Schlievert P.M."/>
            <person name="Musser J.M."/>
        </authorList>
    </citation>
    <scope>NUCLEOTIDE SEQUENCE [LARGE SCALE GENOMIC DNA]</scope>
    <source>
        <strain>ATCC BAA-595 / MGAS315</strain>
    </source>
</reference>
<protein>
    <recommendedName>
        <fullName evidence="3">Oligopeptide transport ATP-binding protein OppF</fullName>
        <ecNumber evidence="1">7.4.2.6</ecNumber>
    </recommendedName>
</protein>
<gene>
    <name type="primary">oppF</name>
    <name type="ordered locus">SpyM3_0219</name>
</gene>
<proteinExistence type="inferred from homology"/>
<feature type="chain" id="PRO_0000092666" description="Oligopeptide transport ATP-binding protein OppF">
    <location>
        <begin position="1"/>
        <end position="307"/>
    </location>
</feature>
<feature type="domain" description="ABC transporter" evidence="2">
    <location>
        <begin position="6"/>
        <end position="251"/>
    </location>
</feature>
<feature type="binding site" evidence="2">
    <location>
        <begin position="42"/>
        <end position="49"/>
    </location>
    <ligand>
        <name>ATP</name>
        <dbReference type="ChEBI" id="CHEBI:30616"/>
    </ligand>
</feature>
<accession>P0CZ32</accession>
<accession>P0A2V7</accession>
<accession>Q9F5U1</accession>
<dbReference type="EC" id="7.4.2.6" evidence="1"/>
<dbReference type="EMBL" id="AE014074">
    <property type="protein sequence ID" value="AAM78826.1"/>
    <property type="molecule type" value="Genomic_DNA"/>
</dbReference>
<dbReference type="RefSeq" id="WP_002986000.1">
    <property type="nucleotide sequence ID" value="NC_004070.1"/>
</dbReference>
<dbReference type="SMR" id="P0CZ32"/>
<dbReference type="KEGG" id="spg:SpyM3_0219"/>
<dbReference type="HOGENOM" id="CLU_000604_1_23_9"/>
<dbReference type="Proteomes" id="UP000000564">
    <property type="component" value="Chromosome"/>
</dbReference>
<dbReference type="GO" id="GO:0005886">
    <property type="term" value="C:plasma membrane"/>
    <property type="evidence" value="ECO:0007669"/>
    <property type="project" value="UniProtKB-SubCell"/>
</dbReference>
<dbReference type="GO" id="GO:0005524">
    <property type="term" value="F:ATP binding"/>
    <property type="evidence" value="ECO:0007669"/>
    <property type="project" value="UniProtKB-KW"/>
</dbReference>
<dbReference type="GO" id="GO:0016887">
    <property type="term" value="F:ATP hydrolysis activity"/>
    <property type="evidence" value="ECO:0007669"/>
    <property type="project" value="InterPro"/>
</dbReference>
<dbReference type="GO" id="GO:0015833">
    <property type="term" value="P:peptide transport"/>
    <property type="evidence" value="ECO:0007669"/>
    <property type="project" value="UniProtKB-KW"/>
</dbReference>
<dbReference type="GO" id="GO:0015031">
    <property type="term" value="P:protein transport"/>
    <property type="evidence" value="ECO:0007669"/>
    <property type="project" value="UniProtKB-KW"/>
</dbReference>
<dbReference type="GO" id="GO:0055085">
    <property type="term" value="P:transmembrane transport"/>
    <property type="evidence" value="ECO:0007669"/>
    <property type="project" value="UniProtKB-ARBA"/>
</dbReference>
<dbReference type="CDD" id="cd03257">
    <property type="entry name" value="ABC_NikE_OppD_transporters"/>
    <property type="match status" value="1"/>
</dbReference>
<dbReference type="FunFam" id="3.40.50.300:FF:000016">
    <property type="entry name" value="Oligopeptide ABC transporter ATP-binding component"/>
    <property type="match status" value="1"/>
</dbReference>
<dbReference type="Gene3D" id="3.40.50.300">
    <property type="entry name" value="P-loop containing nucleotide triphosphate hydrolases"/>
    <property type="match status" value="1"/>
</dbReference>
<dbReference type="InterPro" id="IPR003593">
    <property type="entry name" value="AAA+_ATPase"/>
</dbReference>
<dbReference type="InterPro" id="IPR050319">
    <property type="entry name" value="ABC_transp_ATP-bind"/>
</dbReference>
<dbReference type="InterPro" id="IPR003439">
    <property type="entry name" value="ABC_transporter-like_ATP-bd"/>
</dbReference>
<dbReference type="InterPro" id="IPR017871">
    <property type="entry name" value="ABC_transporter-like_CS"/>
</dbReference>
<dbReference type="InterPro" id="IPR013563">
    <property type="entry name" value="Oligopep_ABC_C"/>
</dbReference>
<dbReference type="InterPro" id="IPR027417">
    <property type="entry name" value="P-loop_NTPase"/>
</dbReference>
<dbReference type="PANTHER" id="PTHR43776:SF7">
    <property type="entry name" value="D,D-DIPEPTIDE TRANSPORT ATP-BINDING PROTEIN DDPF-RELATED"/>
    <property type="match status" value="1"/>
</dbReference>
<dbReference type="PANTHER" id="PTHR43776">
    <property type="entry name" value="TRANSPORT ATP-BINDING PROTEIN"/>
    <property type="match status" value="1"/>
</dbReference>
<dbReference type="Pfam" id="PF00005">
    <property type="entry name" value="ABC_tran"/>
    <property type="match status" value="1"/>
</dbReference>
<dbReference type="Pfam" id="PF08352">
    <property type="entry name" value="oligo_HPY"/>
    <property type="match status" value="1"/>
</dbReference>
<dbReference type="SMART" id="SM00382">
    <property type="entry name" value="AAA"/>
    <property type="match status" value="1"/>
</dbReference>
<dbReference type="SUPFAM" id="SSF52540">
    <property type="entry name" value="P-loop containing nucleoside triphosphate hydrolases"/>
    <property type="match status" value="1"/>
</dbReference>
<dbReference type="PROSITE" id="PS00211">
    <property type="entry name" value="ABC_TRANSPORTER_1"/>
    <property type="match status" value="1"/>
</dbReference>
<dbReference type="PROSITE" id="PS50893">
    <property type="entry name" value="ABC_TRANSPORTER_2"/>
    <property type="match status" value="1"/>
</dbReference>
<evidence type="ECO:0000250" key="1">
    <source>
        <dbReference type="UniProtKB" id="P24137"/>
    </source>
</evidence>
<evidence type="ECO:0000255" key="2">
    <source>
        <dbReference type="PROSITE-ProRule" id="PRU00434"/>
    </source>
</evidence>
<evidence type="ECO:0000305" key="3"/>
<sequence length="307" mass="34716">MSEKLVEVKDLEISFGEGKKKFVAVKNANFFIKKGETFSLVGESGSGKTTIGRAIIGLNDTSSGQILYDGKVINGRKSKSEANELIRKIQMIFQDPAASLNERATVDYIISEGLYNFNLFKTEEERKEKIKNMMAEVGLLSEHLTRYPHEFSGGQRQRIGIARALVMNPEFVIADEPISALDVSVRAQVLNLLKRMQAEKGLTYLFIAHDLSVVRFISDRIAVIHKGVIVEVAETEELFNNPIHPYTQSLLSAVPIPDPILERQKELVVYHPDQHDYTLDKPSMVEIKPNHFVWANQAEIEKYQKEL</sequence>